<protein>
    <recommendedName>
        <fullName evidence="1">tRNA 5-methylaminomethyl-2-thiouridine biosynthesis bifunctional protein MnmC</fullName>
        <shortName evidence="1">tRNA mnm(5)s(2)U biosynthesis bifunctional protein</shortName>
    </recommendedName>
    <domain>
        <recommendedName>
            <fullName evidence="1">tRNA (mnm(5)s(2)U34)-methyltransferase</fullName>
            <ecNumber evidence="1">2.1.1.61</ecNumber>
        </recommendedName>
    </domain>
    <domain>
        <recommendedName>
            <fullName evidence="1">FAD-dependent cmnm(5)s(2)U34 oxidoreductase</fullName>
            <ecNumber evidence="1">1.5.-.-</ecNumber>
        </recommendedName>
    </domain>
</protein>
<reference key="1">
    <citation type="submission" date="2008-01" db="EMBL/GenBank/DDBJ databases">
        <title>Complete sequence of Shewanella halifaxensis HAW-EB4.</title>
        <authorList>
            <consortium name="US DOE Joint Genome Institute"/>
            <person name="Copeland A."/>
            <person name="Lucas S."/>
            <person name="Lapidus A."/>
            <person name="Glavina del Rio T."/>
            <person name="Dalin E."/>
            <person name="Tice H."/>
            <person name="Bruce D."/>
            <person name="Goodwin L."/>
            <person name="Pitluck S."/>
            <person name="Sims D."/>
            <person name="Brettin T."/>
            <person name="Detter J.C."/>
            <person name="Han C."/>
            <person name="Kuske C.R."/>
            <person name="Schmutz J."/>
            <person name="Larimer F."/>
            <person name="Land M."/>
            <person name="Hauser L."/>
            <person name="Kyrpides N."/>
            <person name="Kim E."/>
            <person name="Zhao J.-S."/>
            <person name="Richardson P."/>
        </authorList>
    </citation>
    <scope>NUCLEOTIDE SEQUENCE [LARGE SCALE GENOMIC DNA]</scope>
    <source>
        <strain>HAW-EB4</strain>
    </source>
</reference>
<keyword id="KW-0963">Cytoplasm</keyword>
<keyword id="KW-0274">FAD</keyword>
<keyword id="KW-0285">Flavoprotein</keyword>
<keyword id="KW-0489">Methyltransferase</keyword>
<keyword id="KW-0511">Multifunctional enzyme</keyword>
<keyword id="KW-0560">Oxidoreductase</keyword>
<keyword id="KW-0949">S-adenosyl-L-methionine</keyword>
<keyword id="KW-0808">Transferase</keyword>
<keyword id="KW-0819">tRNA processing</keyword>
<evidence type="ECO:0000255" key="1">
    <source>
        <dbReference type="HAMAP-Rule" id="MF_01102"/>
    </source>
</evidence>
<dbReference type="EC" id="2.1.1.61" evidence="1"/>
<dbReference type="EC" id="1.5.-.-" evidence="1"/>
<dbReference type="EMBL" id="CP000931">
    <property type="protein sequence ID" value="ABZ77209.1"/>
    <property type="molecule type" value="Genomic_DNA"/>
</dbReference>
<dbReference type="RefSeq" id="WP_012277737.1">
    <property type="nucleotide sequence ID" value="NC_010334.1"/>
</dbReference>
<dbReference type="SMR" id="B0TL07"/>
<dbReference type="STRING" id="458817.Shal_2655"/>
<dbReference type="KEGG" id="shl:Shal_2655"/>
<dbReference type="eggNOG" id="COG0665">
    <property type="taxonomic scope" value="Bacteria"/>
</dbReference>
<dbReference type="HOGENOM" id="CLU_022427_2_1_6"/>
<dbReference type="OrthoDB" id="9786494at2"/>
<dbReference type="Proteomes" id="UP000001317">
    <property type="component" value="Chromosome"/>
</dbReference>
<dbReference type="GO" id="GO:0005737">
    <property type="term" value="C:cytoplasm"/>
    <property type="evidence" value="ECO:0007669"/>
    <property type="project" value="UniProtKB-SubCell"/>
</dbReference>
<dbReference type="GO" id="GO:0050660">
    <property type="term" value="F:flavin adenine dinucleotide binding"/>
    <property type="evidence" value="ECO:0007669"/>
    <property type="project" value="UniProtKB-UniRule"/>
</dbReference>
<dbReference type="GO" id="GO:0016645">
    <property type="term" value="F:oxidoreductase activity, acting on the CH-NH group of donors"/>
    <property type="evidence" value="ECO:0007669"/>
    <property type="project" value="InterPro"/>
</dbReference>
<dbReference type="GO" id="GO:0004808">
    <property type="term" value="F:tRNA (5-methylaminomethyl-2-thiouridylate)(34)-methyltransferase activity"/>
    <property type="evidence" value="ECO:0007669"/>
    <property type="project" value="UniProtKB-EC"/>
</dbReference>
<dbReference type="GO" id="GO:0032259">
    <property type="term" value="P:methylation"/>
    <property type="evidence" value="ECO:0007669"/>
    <property type="project" value="UniProtKB-KW"/>
</dbReference>
<dbReference type="GO" id="GO:0002098">
    <property type="term" value="P:tRNA wobble uridine modification"/>
    <property type="evidence" value="ECO:0007669"/>
    <property type="project" value="TreeGrafter"/>
</dbReference>
<dbReference type="Gene3D" id="3.30.9.10">
    <property type="entry name" value="D-Amino Acid Oxidase, subunit A, domain 2"/>
    <property type="match status" value="1"/>
</dbReference>
<dbReference type="Gene3D" id="3.50.50.60">
    <property type="entry name" value="FAD/NAD(P)-binding domain"/>
    <property type="match status" value="1"/>
</dbReference>
<dbReference type="HAMAP" id="MF_01102">
    <property type="entry name" value="MnmC"/>
    <property type="match status" value="1"/>
</dbReference>
<dbReference type="InterPro" id="IPR006076">
    <property type="entry name" value="FAD-dep_OxRdtase"/>
</dbReference>
<dbReference type="InterPro" id="IPR036188">
    <property type="entry name" value="FAD/NAD-bd_sf"/>
</dbReference>
<dbReference type="InterPro" id="IPR023032">
    <property type="entry name" value="tRNA_MAMT_biosynth_bifunc_MnmC"/>
</dbReference>
<dbReference type="InterPro" id="IPR017610">
    <property type="entry name" value="tRNA_S-uridine_synth_MnmC_C"/>
</dbReference>
<dbReference type="NCBIfam" id="TIGR03197">
    <property type="entry name" value="MnmC_Cterm"/>
    <property type="match status" value="1"/>
</dbReference>
<dbReference type="PANTHER" id="PTHR13847">
    <property type="entry name" value="SARCOSINE DEHYDROGENASE-RELATED"/>
    <property type="match status" value="1"/>
</dbReference>
<dbReference type="PANTHER" id="PTHR13847:SF283">
    <property type="entry name" value="TRNA 5-METHYLAMINOMETHYL-2-THIOURIDINE BIOSYNTHESIS BIFUNCTIONAL PROTEIN MNMC"/>
    <property type="match status" value="1"/>
</dbReference>
<dbReference type="Pfam" id="PF01266">
    <property type="entry name" value="DAO"/>
    <property type="match status" value="1"/>
</dbReference>
<dbReference type="SUPFAM" id="SSF51905">
    <property type="entry name" value="FAD/NAD(P)-binding domain"/>
    <property type="match status" value="1"/>
</dbReference>
<organism>
    <name type="scientific">Shewanella halifaxensis (strain HAW-EB4)</name>
    <dbReference type="NCBI Taxonomy" id="458817"/>
    <lineage>
        <taxon>Bacteria</taxon>
        <taxon>Pseudomonadati</taxon>
        <taxon>Pseudomonadota</taxon>
        <taxon>Gammaproteobacteria</taxon>
        <taxon>Alteromonadales</taxon>
        <taxon>Shewanellaceae</taxon>
        <taxon>Shewanella</taxon>
    </lineage>
</organism>
<comment type="function">
    <text evidence="1">Catalyzes the last two steps in the biosynthesis of 5-methylaminomethyl-2-thiouridine (mnm(5)s(2)U) at the wobble position (U34) in tRNA. Catalyzes the FAD-dependent demodification of cmnm(5)s(2)U34 to nm(5)s(2)U34, followed by the transfer of a methyl group from S-adenosyl-L-methionine to nm(5)s(2)U34, to form mnm(5)s(2)U34.</text>
</comment>
<comment type="catalytic activity">
    <reaction evidence="1">
        <text>5-aminomethyl-2-thiouridine(34) in tRNA + S-adenosyl-L-methionine = 5-methylaminomethyl-2-thiouridine(34) in tRNA + S-adenosyl-L-homocysteine + H(+)</text>
        <dbReference type="Rhea" id="RHEA:19569"/>
        <dbReference type="Rhea" id="RHEA-COMP:10195"/>
        <dbReference type="Rhea" id="RHEA-COMP:10197"/>
        <dbReference type="ChEBI" id="CHEBI:15378"/>
        <dbReference type="ChEBI" id="CHEBI:57856"/>
        <dbReference type="ChEBI" id="CHEBI:59789"/>
        <dbReference type="ChEBI" id="CHEBI:74454"/>
        <dbReference type="ChEBI" id="CHEBI:74455"/>
        <dbReference type="EC" id="2.1.1.61"/>
    </reaction>
</comment>
<comment type="cofactor">
    <cofactor evidence="1">
        <name>FAD</name>
        <dbReference type="ChEBI" id="CHEBI:57692"/>
    </cofactor>
</comment>
<comment type="subcellular location">
    <subcellularLocation>
        <location evidence="1">Cytoplasm</location>
    </subcellularLocation>
</comment>
<comment type="similarity">
    <text evidence="1">In the N-terminal section; belongs to the methyltransferase superfamily. tRNA (mnm(5)s(2)U34)-methyltransferase family.</text>
</comment>
<comment type="similarity">
    <text evidence="1">In the C-terminal section; belongs to the DAO family.</text>
</comment>
<accession>B0TL07</accession>
<name>MNMC_SHEHH</name>
<feature type="chain" id="PRO_0000348028" description="tRNA 5-methylaminomethyl-2-thiouridine biosynthesis bifunctional protein MnmC">
    <location>
        <begin position="1"/>
        <end position="636"/>
    </location>
</feature>
<feature type="region of interest" description="tRNA (mnm(5)s(2)U34)-methyltransferase">
    <location>
        <begin position="1"/>
        <end position="202"/>
    </location>
</feature>
<feature type="region of interest" description="FAD-dependent cmnm(5)s(2)U34 oxidoreductase">
    <location>
        <begin position="227"/>
        <end position="636"/>
    </location>
</feature>
<sequence>MTVSKILKQVINRKTTRQIVIAQLGLGSLASLKQLIIEQLQLISDHRVTLKIFSQIEPNLHTFISDTELAELFSSKPNTSLSLAAIEGCQRIIVNDGKLKIDFHLGSYAQQLQQLPIVSSGFIDGWNMADNLAQEQLDSALFWQMAKLAHNDCLFCLEPTLTPEAQQQSLLLAEQVGLYSELPLKNDDTLFQERAALRAQSHQQQAPFPICPAALTPVENDIGIAIIGGGVASACLALSLAERDQRVTLFCEDDALAQAASGNKQGAIYPLLTPDNNTLSQYFQQAYLFSLQRLKTLAARGHKIDFDLCGVVHTGHDERSRKRVAKITHGHNWEPNIALAIAAEQASNIAGVKLDDGGLFYPQGGWVSPQDFTRAAFNQAQAISDASLKLNTQITGIHSKDNVWYLSSKTERFGPFKALIVANGKSITQYPQTQYLQATGFRGQVSHVPSRAKLSKLSAVLCAHGYMTPSNNDLHCLGASYVKNAADTRYSPSEQVENLHKIQHSYIGQDWIEDIDVSGHSARVDVRMVTRDHAPMMGPVPNLDAILALYQQHQLTPESRQFWQTHAAPTHKNLYVLGGLGSRGLCSGPLAAEALAAQICGEPMPISLDFVSLLNPNRMWMRKLLKGKALEMSGKS</sequence>
<gene>
    <name evidence="1" type="primary">mnmC</name>
    <name type="ordered locus">Shal_2655</name>
</gene>
<proteinExistence type="inferred from homology"/>